<comment type="function">
    <text evidence="2">Responsible for the provision of inositol required for synthesis of phosphatidylinositol and polyphosphoinositides.</text>
</comment>
<comment type="catalytic activity">
    <reaction evidence="2">
        <text>a myo-inositol phosphate + H2O = myo-inositol + phosphate</text>
        <dbReference type="Rhea" id="RHEA:24056"/>
        <dbReference type="ChEBI" id="CHEBI:15377"/>
        <dbReference type="ChEBI" id="CHEBI:17268"/>
        <dbReference type="ChEBI" id="CHEBI:43474"/>
        <dbReference type="ChEBI" id="CHEBI:84139"/>
        <dbReference type="EC" id="3.1.3.25"/>
    </reaction>
</comment>
<comment type="cofactor">
    <cofactor evidence="2">
        <name>Mg(2+)</name>
        <dbReference type="ChEBI" id="CHEBI:18420"/>
    </cofactor>
</comment>
<comment type="pathway">
    <text>Polyol metabolism; myo-inositol biosynthesis; myo-inositol from D-glucose 6-phosphate: step 2/2.</text>
</comment>
<comment type="tissue specificity">
    <text evidence="2">Expressed in the shoot apex, roots, stems, leaves, flowers and young and mature green fruits.</text>
</comment>
<comment type="induction">
    <text evidence="2">Up-regulated by light and down-regulated by Li(+).</text>
</comment>
<comment type="similarity">
    <text evidence="3">Belongs to the inositol monophosphatase superfamily.</text>
</comment>
<sequence>MAQNGSVEQFLDVAVEAAKKAGEIIREGFYKTKHVEHKGMVDLVTETDKACEDFIFNHLKQRFPSHKFIGEETTAACGNFELTDEPTWIVDPLDGTTNFVHGFPFVCVSIGLTIEKKPTVGVVYNPIIDELFTGIDGKGAFLNGKPIKVSSQSELVKALLATEAGTNRDKLVVDATTGRINSLLFKVRSLRMCGSCALNLCGVACGRLDLFYELEFGGPWDVAGGAVIVKEAGGFVFDPSGSEFDLTARRVAATNAHLKDAFIKALNE</sequence>
<protein>
    <recommendedName>
        <fullName>Inositol monophosphatase 3</fullName>
        <shortName>IMP 3</shortName>
        <shortName>IMPase 3</shortName>
        <shortName>LeIMP3</shortName>
        <ecNumber>3.1.3.25</ecNumber>
    </recommendedName>
    <alternativeName>
        <fullName>Inositol-1(or 4)-monophosphatase 3</fullName>
    </alternativeName>
</protein>
<proteinExistence type="evidence at protein level"/>
<name>IMP3_SOLLC</name>
<reference key="1">
    <citation type="journal article" date="1995" name="Plant Cell">
        <title>Plant inositol monophosphatase is a lithium-sensitive enzyme encoded by a multigene family.</title>
        <authorList>
            <person name="Gillaspy G.E."/>
            <person name="Keddie J.S."/>
            <person name="Oda K."/>
            <person name="Gruissem W."/>
        </authorList>
    </citation>
    <scope>NUCLEOTIDE SEQUENCE [MRNA]</scope>
    <scope>FUNCTION</scope>
    <scope>CATALYTIC ACTIVITY</scope>
    <scope>COFACTOR</scope>
    <scope>ACTIVITY REGULATION</scope>
    <scope>INDUCTION BY LIGHT AND LITHIUM</scope>
    <scope>TISSUE SPECIFICITY</scope>
    <source>
        <strain>cv. VFNT Cherry</strain>
    </source>
</reference>
<reference key="2">
    <citation type="journal article" date="2012" name="Nature">
        <title>The tomato genome sequence provides insights into fleshy fruit evolution.</title>
        <authorList>
            <consortium name="Tomato Genome Consortium"/>
        </authorList>
    </citation>
    <scope>NUCLEOTIDE SEQUENCE [LARGE SCALE GENOMIC DNA]</scope>
    <source>
        <strain>cv. Heinz 1706</strain>
    </source>
</reference>
<feature type="chain" id="PRO_0000142525" description="Inositol monophosphatase 3">
    <location>
        <begin position="1"/>
        <end position="268"/>
    </location>
</feature>
<feature type="binding site" evidence="1">
    <location>
        <position position="71"/>
    </location>
    <ligand>
        <name>Mg(2+)</name>
        <dbReference type="ChEBI" id="CHEBI:18420"/>
        <label>1</label>
    </ligand>
</feature>
<feature type="binding site" evidence="1">
    <location>
        <position position="71"/>
    </location>
    <ligand>
        <name>substrate</name>
    </ligand>
</feature>
<feature type="binding site" evidence="1">
    <location>
        <position position="91"/>
    </location>
    <ligand>
        <name>Mg(2+)</name>
        <dbReference type="ChEBI" id="CHEBI:18420"/>
        <label>1</label>
    </ligand>
</feature>
<feature type="binding site" evidence="1">
    <location>
        <position position="91"/>
    </location>
    <ligand>
        <name>Mg(2+)</name>
        <dbReference type="ChEBI" id="CHEBI:18420"/>
        <label>2</label>
    </ligand>
</feature>
<feature type="binding site" evidence="1">
    <location>
        <begin position="93"/>
        <end position="96"/>
    </location>
    <ligand>
        <name>substrate</name>
    </ligand>
</feature>
<feature type="binding site" evidence="1">
    <location>
        <position position="93"/>
    </location>
    <ligand>
        <name>Mg(2+)</name>
        <dbReference type="ChEBI" id="CHEBI:18420"/>
        <label>1</label>
    </ligand>
</feature>
<feature type="binding site" evidence="1">
    <location>
        <position position="94"/>
    </location>
    <ligand>
        <name>Mg(2+)</name>
        <dbReference type="ChEBI" id="CHEBI:18420"/>
        <label>2</label>
    </ligand>
</feature>
<feature type="binding site" evidence="1">
    <location>
        <begin position="194"/>
        <end position="196"/>
    </location>
    <ligand>
        <name>substrate</name>
    </ligand>
</feature>
<feature type="binding site" evidence="1">
    <location>
        <position position="213"/>
    </location>
    <ligand>
        <name>substrate</name>
    </ligand>
</feature>
<feature type="binding site" evidence="1">
    <location>
        <position position="221"/>
    </location>
    <ligand>
        <name>Mg(2+)</name>
        <dbReference type="ChEBI" id="CHEBI:18420"/>
        <label>2</label>
    </ligand>
</feature>
<feature type="binding site" evidence="1">
    <location>
        <position position="221"/>
    </location>
    <ligand>
        <name>substrate</name>
    </ligand>
</feature>
<organism>
    <name type="scientific">Solanum lycopersicum</name>
    <name type="common">Tomato</name>
    <name type="synonym">Lycopersicon esculentum</name>
    <dbReference type="NCBI Taxonomy" id="4081"/>
    <lineage>
        <taxon>Eukaryota</taxon>
        <taxon>Viridiplantae</taxon>
        <taxon>Streptophyta</taxon>
        <taxon>Embryophyta</taxon>
        <taxon>Tracheophyta</taxon>
        <taxon>Spermatophyta</taxon>
        <taxon>Magnoliopsida</taxon>
        <taxon>eudicotyledons</taxon>
        <taxon>Gunneridae</taxon>
        <taxon>Pentapetalae</taxon>
        <taxon>asterids</taxon>
        <taxon>lamiids</taxon>
        <taxon>Solanales</taxon>
        <taxon>Solanaceae</taxon>
        <taxon>Solanoideae</taxon>
        <taxon>Solaneae</taxon>
        <taxon>Solanum</taxon>
        <taxon>Solanum subgen. Lycopersicon</taxon>
    </lineage>
</organism>
<evidence type="ECO:0000250" key="1"/>
<evidence type="ECO:0000269" key="2">
    <source>
    </source>
</evidence>
<evidence type="ECO:0000305" key="3"/>
<keyword id="KW-0378">Hydrolase</keyword>
<keyword id="KW-0452">Lithium</keyword>
<keyword id="KW-0460">Magnesium</keyword>
<keyword id="KW-0479">Metal-binding</keyword>
<keyword id="KW-1185">Reference proteome</keyword>
<dbReference type="EC" id="3.1.3.25"/>
<dbReference type="EMBL" id="U39059">
    <property type="protein sequence ID" value="AAB19031.1"/>
    <property type="molecule type" value="mRNA"/>
</dbReference>
<dbReference type="EMBL" id="AEKE02005274">
    <property type="status" value="NOT_ANNOTATED_CDS"/>
    <property type="molecule type" value="Genomic_DNA"/>
</dbReference>
<dbReference type="PIR" id="T07795">
    <property type="entry name" value="T07795"/>
</dbReference>
<dbReference type="RefSeq" id="NP_001233837.1">
    <property type="nucleotide sequence ID" value="NM_001246908.2"/>
</dbReference>
<dbReference type="SMR" id="P54928"/>
<dbReference type="FunCoup" id="P54928">
    <property type="interactions" value="1833"/>
</dbReference>
<dbReference type="STRING" id="4081.P54928"/>
<dbReference type="PaxDb" id="4081-Solyc11g012410.1.1"/>
<dbReference type="EnsemblPlants" id="Solyc11g012410.2.1">
    <property type="protein sequence ID" value="Solyc11g012410.2.1"/>
    <property type="gene ID" value="Solyc11g012410.2"/>
</dbReference>
<dbReference type="GeneID" id="544013"/>
<dbReference type="Gramene" id="Solyc11g012410.2.1">
    <property type="protein sequence ID" value="Solyc11g012410.2.1"/>
    <property type="gene ID" value="Solyc11g012410.2"/>
</dbReference>
<dbReference type="KEGG" id="sly:544013"/>
<dbReference type="eggNOG" id="KOG2951">
    <property type="taxonomic scope" value="Eukaryota"/>
</dbReference>
<dbReference type="HOGENOM" id="CLU_044118_1_0_1"/>
<dbReference type="InParanoid" id="P54928"/>
<dbReference type="OMA" id="ERGLHPW"/>
<dbReference type="OrthoDB" id="10254945at2759"/>
<dbReference type="PhylomeDB" id="P54928"/>
<dbReference type="UniPathway" id="UPA00823">
    <property type="reaction ID" value="UER00788"/>
</dbReference>
<dbReference type="Proteomes" id="UP000004994">
    <property type="component" value="Chromosome 11"/>
</dbReference>
<dbReference type="GO" id="GO:0008934">
    <property type="term" value="F:inositol monophosphate 1-phosphatase activity"/>
    <property type="evidence" value="ECO:0000318"/>
    <property type="project" value="GO_Central"/>
</dbReference>
<dbReference type="GO" id="GO:0052834">
    <property type="term" value="F:inositol monophosphate phosphatase activity"/>
    <property type="evidence" value="ECO:0000314"/>
    <property type="project" value="UniProtKB"/>
</dbReference>
<dbReference type="GO" id="GO:0000287">
    <property type="term" value="F:magnesium ion binding"/>
    <property type="evidence" value="ECO:0000314"/>
    <property type="project" value="UniProtKB"/>
</dbReference>
<dbReference type="GO" id="GO:0006021">
    <property type="term" value="P:inositol biosynthetic process"/>
    <property type="evidence" value="ECO:0000314"/>
    <property type="project" value="UniProtKB"/>
</dbReference>
<dbReference type="GO" id="GO:0006020">
    <property type="term" value="P:inositol metabolic process"/>
    <property type="evidence" value="ECO:0000318"/>
    <property type="project" value="GO_Central"/>
</dbReference>
<dbReference type="GO" id="GO:0046854">
    <property type="term" value="P:phosphatidylinositol phosphate biosynthetic process"/>
    <property type="evidence" value="ECO:0007669"/>
    <property type="project" value="InterPro"/>
</dbReference>
<dbReference type="GO" id="GO:0007165">
    <property type="term" value="P:signal transduction"/>
    <property type="evidence" value="ECO:0000318"/>
    <property type="project" value="GO_Central"/>
</dbReference>
<dbReference type="CDD" id="cd01639">
    <property type="entry name" value="IMPase"/>
    <property type="match status" value="1"/>
</dbReference>
<dbReference type="FunFam" id="3.30.540.10:FF:000004">
    <property type="entry name" value="Inositol-1-monophosphatase"/>
    <property type="match status" value="1"/>
</dbReference>
<dbReference type="FunFam" id="3.40.190.80:FF:000002">
    <property type="entry name" value="Inositol-1-monophosphatase"/>
    <property type="match status" value="1"/>
</dbReference>
<dbReference type="Gene3D" id="3.40.190.80">
    <property type="match status" value="1"/>
</dbReference>
<dbReference type="Gene3D" id="3.30.540.10">
    <property type="entry name" value="Fructose-1,6-Bisphosphatase, subunit A, domain 1"/>
    <property type="match status" value="1"/>
</dbReference>
<dbReference type="InterPro" id="IPR033942">
    <property type="entry name" value="IMPase"/>
</dbReference>
<dbReference type="InterPro" id="IPR020583">
    <property type="entry name" value="Inositol_monoP_metal-BS"/>
</dbReference>
<dbReference type="InterPro" id="IPR020552">
    <property type="entry name" value="Inositol_monoPase_Li-sen"/>
</dbReference>
<dbReference type="InterPro" id="IPR000760">
    <property type="entry name" value="Inositol_monophosphatase-like"/>
</dbReference>
<dbReference type="InterPro" id="IPR020550">
    <property type="entry name" value="Inositol_monophosphatase_CS"/>
</dbReference>
<dbReference type="PANTHER" id="PTHR20854">
    <property type="entry name" value="INOSITOL MONOPHOSPHATASE"/>
    <property type="match status" value="1"/>
</dbReference>
<dbReference type="PANTHER" id="PTHR20854:SF48">
    <property type="entry name" value="INOSITOL MONOPHOSPHATASE 3"/>
    <property type="match status" value="1"/>
</dbReference>
<dbReference type="Pfam" id="PF00459">
    <property type="entry name" value="Inositol_P"/>
    <property type="match status" value="1"/>
</dbReference>
<dbReference type="PRINTS" id="PR00377">
    <property type="entry name" value="IMPHPHTASES"/>
</dbReference>
<dbReference type="PRINTS" id="PR00378">
    <property type="entry name" value="LIIMPHPHTASE"/>
</dbReference>
<dbReference type="SUPFAM" id="SSF56655">
    <property type="entry name" value="Carbohydrate phosphatase"/>
    <property type="match status" value="1"/>
</dbReference>
<dbReference type="PROSITE" id="PS00629">
    <property type="entry name" value="IMP_1"/>
    <property type="match status" value="1"/>
</dbReference>
<dbReference type="PROSITE" id="PS00630">
    <property type="entry name" value="IMP_2"/>
    <property type="match status" value="1"/>
</dbReference>
<accession>P54928</accession>
<gene>
    <name type="primary">IMP3</name>
</gene>